<dbReference type="EC" id="5.6.2.2" evidence="1"/>
<dbReference type="EMBL" id="AJ550618">
    <property type="protein sequence ID" value="CAD79468.1"/>
    <property type="molecule type" value="mRNA"/>
</dbReference>
<dbReference type="EMBL" id="CM000128">
    <property type="protein sequence ID" value="EAY89531.1"/>
    <property type="status" value="ALT_SEQ"/>
    <property type="molecule type" value="Genomic_DNA"/>
</dbReference>
<dbReference type="SMR" id="A2XFC1"/>
<dbReference type="STRING" id="39946.A2XFC1"/>
<dbReference type="EnsemblPlants" id="OsGoSa_03g0013300.01">
    <property type="protein sequence ID" value="OsGoSa_03g0013300.01"/>
    <property type="gene ID" value="OsGoSa_03g0013300"/>
</dbReference>
<dbReference type="EnsemblPlants" id="OsIR64_03g0013050.01">
    <property type="protein sequence ID" value="OsIR64_03g0013050.01"/>
    <property type="gene ID" value="OsIR64_03g0013050"/>
</dbReference>
<dbReference type="EnsemblPlants" id="OsKYG_03g0013240.01">
    <property type="protein sequence ID" value="OsKYG_03g0013240.01"/>
    <property type="gene ID" value="OsKYG_03g0013240"/>
</dbReference>
<dbReference type="EnsemblPlants" id="OsLima_03g0013250.01">
    <property type="protein sequence ID" value="OsLima_03g0013250.01"/>
    <property type="gene ID" value="OsLima_03g0013250"/>
</dbReference>
<dbReference type="EnsemblPlants" id="OsLiXu_03g0013170.01">
    <property type="protein sequence ID" value="OsLiXu_03g0013170.01"/>
    <property type="gene ID" value="OsLiXu_03g0013170"/>
</dbReference>
<dbReference type="EnsemblPlants" id="OsMH63_03G013170_01">
    <property type="protein sequence ID" value="OsMH63_03G013170_01"/>
    <property type="gene ID" value="OsMH63_03G013170"/>
</dbReference>
<dbReference type="EnsemblPlants" id="OsPr106_03g0013150.01">
    <property type="protein sequence ID" value="OsPr106_03g0013150.01"/>
    <property type="gene ID" value="OsPr106_03g0013150"/>
</dbReference>
<dbReference type="EnsemblPlants" id="OsZS97_03G013110_01">
    <property type="protein sequence ID" value="OsZS97_03G013110_01"/>
    <property type="gene ID" value="OsZS97_03G013110"/>
</dbReference>
<dbReference type="Gramene" id="OsGoSa_03g0013300.01">
    <property type="protein sequence ID" value="OsGoSa_03g0013300.01"/>
    <property type="gene ID" value="OsGoSa_03g0013300"/>
</dbReference>
<dbReference type="Gramene" id="OsIR64_03g0013050.01">
    <property type="protein sequence ID" value="OsIR64_03g0013050.01"/>
    <property type="gene ID" value="OsIR64_03g0013050"/>
</dbReference>
<dbReference type="Gramene" id="OsKYG_03g0013240.01">
    <property type="protein sequence ID" value="OsKYG_03g0013240.01"/>
    <property type="gene ID" value="OsKYG_03g0013240"/>
</dbReference>
<dbReference type="Gramene" id="OsLima_03g0013250.01">
    <property type="protein sequence ID" value="OsLima_03g0013250.01"/>
    <property type="gene ID" value="OsLima_03g0013250"/>
</dbReference>
<dbReference type="Gramene" id="OsLiXu_03g0013170.01">
    <property type="protein sequence ID" value="OsLiXu_03g0013170.01"/>
    <property type="gene ID" value="OsLiXu_03g0013170"/>
</dbReference>
<dbReference type="Gramene" id="OsMH63_03G013170_01">
    <property type="protein sequence ID" value="OsMH63_03G013170_01"/>
    <property type="gene ID" value="OsMH63_03G013170"/>
</dbReference>
<dbReference type="Gramene" id="OsPr106_03g0013150.01">
    <property type="protein sequence ID" value="OsPr106_03g0013150.01"/>
    <property type="gene ID" value="OsPr106_03g0013150"/>
</dbReference>
<dbReference type="Gramene" id="OsZS97_03G013110_01">
    <property type="protein sequence ID" value="OsZS97_03G013110_01"/>
    <property type="gene ID" value="OsZS97_03G013110"/>
</dbReference>
<dbReference type="HOGENOM" id="CLU_354665_0_0_1"/>
<dbReference type="OrthoDB" id="5377392at2759"/>
<dbReference type="Proteomes" id="UP000007015">
    <property type="component" value="Chromosome 3"/>
</dbReference>
<dbReference type="GO" id="GO:0009330">
    <property type="term" value="C:DNA topoisomerase type II (double strand cut, ATP-hydrolyzing) complex"/>
    <property type="evidence" value="ECO:0007669"/>
    <property type="project" value="UniProtKB-UniRule"/>
</dbReference>
<dbReference type="GO" id="GO:0000228">
    <property type="term" value="C:nuclear chromosome"/>
    <property type="evidence" value="ECO:0007669"/>
    <property type="project" value="TreeGrafter"/>
</dbReference>
<dbReference type="GO" id="GO:0005524">
    <property type="term" value="F:ATP binding"/>
    <property type="evidence" value="ECO:0007669"/>
    <property type="project" value="InterPro"/>
</dbReference>
<dbReference type="GO" id="GO:0003677">
    <property type="term" value="F:DNA binding"/>
    <property type="evidence" value="ECO:0007669"/>
    <property type="project" value="UniProtKB-UniRule"/>
</dbReference>
<dbReference type="GO" id="GO:0003918">
    <property type="term" value="F:DNA topoisomerase type II (double strand cut, ATP-hydrolyzing) activity"/>
    <property type="evidence" value="ECO:0007669"/>
    <property type="project" value="UniProtKB-UniRule"/>
</dbReference>
<dbReference type="GO" id="GO:0000287">
    <property type="term" value="F:magnesium ion binding"/>
    <property type="evidence" value="ECO:0007669"/>
    <property type="project" value="UniProtKB-UniRule"/>
</dbReference>
<dbReference type="GO" id="GO:0006265">
    <property type="term" value="P:DNA topological change"/>
    <property type="evidence" value="ECO:0007669"/>
    <property type="project" value="UniProtKB-UniRule"/>
</dbReference>
<dbReference type="GO" id="GO:0042138">
    <property type="term" value="P:meiotic DNA double-strand break formation"/>
    <property type="evidence" value="ECO:0007669"/>
    <property type="project" value="TreeGrafter"/>
</dbReference>
<dbReference type="GO" id="GO:0000706">
    <property type="term" value="P:meiotic DNA double-strand break processing"/>
    <property type="evidence" value="ECO:0007669"/>
    <property type="project" value="TreeGrafter"/>
</dbReference>
<dbReference type="GO" id="GO:0007131">
    <property type="term" value="P:reciprocal meiotic recombination"/>
    <property type="evidence" value="ECO:0007669"/>
    <property type="project" value="TreeGrafter"/>
</dbReference>
<dbReference type="CDD" id="cd00223">
    <property type="entry name" value="TOPRIM_TopoIIB_SPO"/>
    <property type="match status" value="1"/>
</dbReference>
<dbReference type="FunFam" id="1.10.10.10:FF:000387">
    <property type="entry name" value="DNA topoisomerase 6 subunit A"/>
    <property type="match status" value="1"/>
</dbReference>
<dbReference type="FunFam" id="3.40.1360.10:FF:000003">
    <property type="entry name" value="DNA topoisomerase 6 subunit A"/>
    <property type="match status" value="1"/>
</dbReference>
<dbReference type="Gene3D" id="3.40.1360.10">
    <property type="match status" value="1"/>
</dbReference>
<dbReference type="Gene3D" id="1.10.10.10">
    <property type="entry name" value="Winged helix-like DNA-binding domain superfamily/Winged helix DNA-binding domain"/>
    <property type="match status" value="1"/>
</dbReference>
<dbReference type="HAMAP" id="MF_00132">
    <property type="entry name" value="Top6A"/>
    <property type="match status" value="1"/>
</dbReference>
<dbReference type="InterPro" id="IPR002815">
    <property type="entry name" value="Spo11/TopoVI_A"/>
</dbReference>
<dbReference type="InterPro" id="IPR013049">
    <property type="entry name" value="Spo11/TopoVI_A_N"/>
</dbReference>
<dbReference type="InterPro" id="IPR036078">
    <property type="entry name" value="Spo11/TopoVI_A_sf"/>
</dbReference>
<dbReference type="InterPro" id="IPR004085">
    <property type="entry name" value="TopoVI_A"/>
</dbReference>
<dbReference type="InterPro" id="IPR034136">
    <property type="entry name" value="TOPRIM_Topo6A/Spo11"/>
</dbReference>
<dbReference type="InterPro" id="IPR036388">
    <property type="entry name" value="WH-like_DNA-bd_sf"/>
</dbReference>
<dbReference type="PANTHER" id="PTHR10848:SF4">
    <property type="entry name" value="DNA TOPOISOMERASE 6 SUBUNIT A"/>
    <property type="match status" value="1"/>
</dbReference>
<dbReference type="PANTHER" id="PTHR10848">
    <property type="entry name" value="MEIOTIC RECOMBINATION PROTEIN SPO11"/>
    <property type="match status" value="1"/>
</dbReference>
<dbReference type="Pfam" id="PF21180">
    <property type="entry name" value="TOP6A-Spo11_Toprim"/>
    <property type="match status" value="1"/>
</dbReference>
<dbReference type="Pfam" id="PF04406">
    <property type="entry name" value="TP6A_N"/>
    <property type="match status" value="1"/>
</dbReference>
<dbReference type="PRINTS" id="PR01550">
    <property type="entry name" value="TOP6AFAMILY"/>
</dbReference>
<dbReference type="PRINTS" id="PR01552">
    <property type="entry name" value="TPISMRASE6A"/>
</dbReference>
<dbReference type="SUPFAM" id="SSF56726">
    <property type="entry name" value="DNA topoisomerase IV, alpha subunit"/>
    <property type="match status" value="1"/>
</dbReference>
<dbReference type="PROSITE" id="PS52041">
    <property type="entry name" value="TOPO_IIB"/>
    <property type="match status" value="1"/>
</dbReference>
<name>TOP6A_ORYSI</name>
<proteinExistence type="evidence at protein level"/>
<comment type="function">
    <text evidence="1">Component of the DNA topoisomerase VI involved in chromatin organization and progression of endoreduplication cycles. Relaxes both positive and negative superturns and exhibits a strong decatenase activity (By similarity). May be involved in cell proliferation and stress tolerance.</text>
</comment>
<comment type="catalytic activity">
    <reaction evidence="1">
        <text>ATP-dependent breakage, passage and rejoining of double-stranded DNA.</text>
        <dbReference type="EC" id="5.6.2.2"/>
    </reaction>
</comment>
<comment type="cofactor">
    <cofactor evidence="1">
        <name>Mg(2+)</name>
        <dbReference type="ChEBI" id="CHEBI:18420"/>
    </cofactor>
</comment>
<comment type="subunit">
    <text evidence="1 4">Homodimer. Heterotetramer of two TOP6A and two TOP6B subunits (By similarity). Interacts with TOP6B.</text>
</comment>
<comment type="subcellular location">
    <subcellularLocation>
        <location evidence="1 4">Nucleus</location>
    </subcellularLocation>
</comment>
<comment type="tissue specificity">
    <text evidence="4">Highly expressed in flowers before pollination. Expressed in roots and shoots.</text>
</comment>
<comment type="induction">
    <text evidence="4">By auxin, abscisic acid (ABA) and benzylaminopurine.</text>
</comment>
<comment type="similarity">
    <text evidence="1">Belongs to the TOP6A family.</text>
</comment>
<comment type="sequence caution" evidence="5">
    <conflict type="erroneous gene model prediction">
        <sequence resource="EMBL-CDS" id="EAY89531"/>
    </conflict>
</comment>
<sequence>MSEKKRRGGAGAGAASGSASKKPRVSTAASYAESLRSKLRPDASILATLRSLASACSKSKPAGSSSSSSSASKALAAEDDPAASYIVVADQDSASVTSRINRLVLAAARSILSGRGFSFAVPSRAASNQVYLPDLDRIVLVRRESARPFANVATARKATITARVLSLVHAVLRRGIHVTKRDLFYTDVKLFGDQAQSDAVLDDVSCMLGCTRSSLHVVASEKGVVVGRLTFADDGDRIDCTRMGVGGKAIPPNIDRVSGIESDALFILLVEKDAAFMRLAEDRFYNRFPCIILTAKGQPDVATRLFLRRLKVELKLPVLALVDSDPYGLKILSVYMCGSKNMSYDSANLTTPDIKWLGVRPSDLDKYRVPEQCRLPMTDHDIKVGKELLEEDFVKQNEGWVKELETMLRTRQKAEIQALSSFGFQYLTEVYLPLKLQQQDWI</sequence>
<reference key="1">
    <citation type="journal article" date="2006" name="FEBS J.">
        <title>Overexpression of putative topoisomerase 6 genes from rice confers stress tolerance in transgenic Arabidopsis plants.</title>
        <authorList>
            <person name="Jain M."/>
            <person name="Tyagi A.K."/>
            <person name="Khurana J.P."/>
        </authorList>
    </citation>
    <scope>NUCLEOTIDE SEQUENCE [MRNA]</scope>
    <scope>INTERACTION WITH TOP6B</scope>
    <scope>SUBCELLULAR LOCATION</scope>
    <scope>TISSUE SPECIFICITY</scope>
    <scope>INDUCTION</scope>
    <source>
        <strain>cv. Pusa Basmati</strain>
    </source>
</reference>
<reference key="2">
    <citation type="journal article" date="2005" name="PLoS Biol.">
        <title>The genomes of Oryza sativa: a history of duplications.</title>
        <authorList>
            <person name="Yu J."/>
            <person name="Wang J."/>
            <person name="Lin W."/>
            <person name="Li S."/>
            <person name="Li H."/>
            <person name="Zhou J."/>
            <person name="Ni P."/>
            <person name="Dong W."/>
            <person name="Hu S."/>
            <person name="Zeng C."/>
            <person name="Zhang J."/>
            <person name="Zhang Y."/>
            <person name="Li R."/>
            <person name="Xu Z."/>
            <person name="Li S."/>
            <person name="Li X."/>
            <person name="Zheng H."/>
            <person name="Cong L."/>
            <person name="Lin L."/>
            <person name="Yin J."/>
            <person name="Geng J."/>
            <person name="Li G."/>
            <person name="Shi J."/>
            <person name="Liu J."/>
            <person name="Lv H."/>
            <person name="Li J."/>
            <person name="Wang J."/>
            <person name="Deng Y."/>
            <person name="Ran L."/>
            <person name="Shi X."/>
            <person name="Wang X."/>
            <person name="Wu Q."/>
            <person name="Li C."/>
            <person name="Ren X."/>
            <person name="Wang J."/>
            <person name="Wang X."/>
            <person name="Li D."/>
            <person name="Liu D."/>
            <person name="Zhang X."/>
            <person name="Ji Z."/>
            <person name="Zhao W."/>
            <person name="Sun Y."/>
            <person name="Zhang Z."/>
            <person name="Bao J."/>
            <person name="Han Y."/>
            <person name="Dong L."/>
            <person name="Ji J."/>
            <person name="Chen P."/>
            <person name="Wu S."/>
            <person name="Liu J."/>
            <person name="Xiao Y."/>
            <person name="Bu D."/>
            <person name="Tan J."/>
            <person name="Yang L."/>
            <person name="Ye C."/>
            <person name="Zhang J."/>
            <person name="Xu J."/>
            <person name="Zhou Y."/>
            <person name="Yu Y."/>
            <person name="Zhang B."/>
            <person name="Zhuang S."/>
            <person name="Wei H."/>
            <person name="Liu B."/>
            <person name="Lei M."/>
            <person name="Yu H."/>
            <person name="Li Y."/>
            <person name="Xu H."/>
            <person name="Wei S."/>
            <person name="He X."/>
            <person name="Fang L."/>
            <person name="Zhang Z."/>
            <person name="Zhang Y."/>
            <person name="Huang X."/>
            <person name="Su Z."/>
            <person name="Tong W."/>
            <person name="Li J."/>
            <person name="Tong Z."/>
            <person name="Li S."/>
            <person name="Ye J."/>
            <person name="Wang L."/>
            <person name="Fang L."/>
            <person name="Lei T."/>
            <person name="Chen C.-S."/>
            <person name="Chen H.-C."/>
            <person name="Xu Z."/>
            <person name="Li H."/>
            <person name="Huang H."/>
            <person name="Zhang F."/>
            <person name="Xu H."/>
            <person name="Li N."/>
            <person name="Zhao C."/>
            <person name="Li S."/>
            <person name="Dong L."/>
            <person name="Huang Y."/>
            <person name="Li L."/>
            <person name="Xi Y."/>
            <person name="Qi Q."/>
            <person name="Li W."/>
            <person name="Zhang B."/>
            <person name="Hu W."/>
            <person name="Zhang Y."/>
            <person name="Tian X."/>
            <person name="Jiao Y."/>
            <person name="Liang X."/>
            <person name="Jin J."/>
            <person name="Gao L."/>
            <person name="Zheng W."/>
            <person name="Hao B."/>
            <person name="Liu S.-M."/>
            <person name="Wang W."/>
            <person name="Yuan L."/>
            <person name="Cao M."/>
            <person name="McDermott J."/>
            <person name="Samudrala R."/>
            <person name="Wang J."/>
            <person name="Wong G.K.-S."/>
            <person name="Yang H."/>
        </authorList>
    </citation>
    <scope>NUCLEOTIDE SEQUENCE [LARGE SCALE GENOMIC DNA]</scope>
    <source>
        <strain>cv. 93-11</strain>
    </source>
</reference>
<accession>A2XFC1</accession>
<accession>Q5ZPV7</accession>
<keyword id="KW-0238">DNA-binding</keyword>
<keyword id="KW-0413">Isomerase</keyword>
<keyword id="KW-0460">Magnesium</keyword>
<keyword id="KW-0479">Metal-binding</keyword>
<keyword id="KW-0547">Nucleotide-binding</keyword>
<keyword id="KW-0539">Nucleus</keyword>
<keyword id="KW-1185">Reference proteome</keyword>
<keyword id="KW-0799">Topoisomerase</keyword>
<gene>
    <name evidence="1" type="primary">TOP6A3</name>
    <name type="synonym">SPO11-3</name>
    <name type="synonym">TOP6A</name>
    <name type="ORF">OsI_11065</name>
</gene>
<organism>
    <name type="scientific">Oryza sativa subsp. indica</name>
    <name type="common">Rice</name>
    <dbReference type="NCBI Taxonomy" id="39946"/>
    <lineage>
        <taxon>Eukaryota</taxon>
        <taxon>Viridiplantae</taxon>
        <taxon>Streptophyta</taxon>
        <taxon>Embryophyta</taxon>
        <taxon>Tracheophyta</taxon>
        <taxon>Spermatophyta</taxon>
        <taxon>Magnoliopsida</taxon>
        <taxon>Liliopsida</taxon>
        <taxon>Poales</taxon>
        <taxon>Poaceae</taxon>
        <taxon>BOP clade</taxon>
        <taxon>Oryzoideae</taxon>
        <taxon>Oryzeae</taxon>
        <taxon>Oryzinae</taxon>
        <taxon>Oryza</taxon>
        <taxon>Oryza sativa</taxon>
    </lineage>
</organism>
<evidence type="ECO:0000255" key="1">
    <source>
        <dbReference type="HAMAP-Rule" id="MF_03164"/>
    </source>
</evidence>
<evidence type="ECO:0000255" key="2">
    <source>
        <dbReference type="PROSITE-ProRule" id="PRU01385"/>
    </source>
</evidence>
<evidence type="ECO:0000256" key="3">
    <source>
        <dbReference type="SAM" id="MobiDB-lite"/>
    </source>
</evidence>
<evidence type="ECO:0000269" key="4">
    <source>
    </source>
</evidence>
<evidence type="ECO:0000305" key="5"/>
<feature type="chain" id="PRO_0000421934" description="DNA topoisomerase 6 subunit A3">
    <location>
        <begin position="1"/>
        <end position="442"/>
    </location>
</feature>
<feature type="domain" description="Topo IIA-type catalytic" evidence="2">
    <location>
        <begin position="91"/>
        <end position="224"/>
    </location>
</feature>
<feature type="region of interest" description="Disordered" evidence="3">
    <location>
        <begin position="1"/>
        <end position="34"/>
    </location>
</feature>
<feature type="active site" description="O-(5'-phospho-DNA)-tyrosine intermediate" evidence="2">
    <location>
        <position position="185"/>
    </location>
</feature>
<feature type="binding site" evidence="1">
    <location>
        <position position="271"/>
    </location>
    <ligand>
        <name>Mg(2+)</name>
        <dbReference type="ChEBI" id="CHEBI:18420"/>
    </ligand>
</feature>
<feature type="binding site" evidence="1">
    <location>
        <position position="323"/>
    </location>
    <ligand>
        <name>Mg(2+)</name>
        <dbReference type="ChEBI" id="CHEBI:18420"/>
    </ligand>
</feature>
<feature type="sequence conflict" description="In Ref. 1; CAD79468." evidence="5" ref="1">
    <original>R</original>
    <variation>S</variation>
    <location>
        <position position="99"/>
    </location>
</feature>
<feature type="sequence conflict" description="In Ref. 1; CAD79468." evidence="5" ref="1">
    <original>D</original>
    <variation>N</variation>
    <location>
        <position position="136"/>
    </location>
</feature>
<feature type="sequence conflict" description="In Ref. 1; CAD79468." evidence="5" ref="1">
    <original>S</original>
    <variation>F</variation>
    <location>
        <position position="166"/>
    </location>
</feature>
<feature type="sequence conflict" description="In Ref. 1; CAD79468." evidence="5" ref="1">
    <original>L</original>
    <variation>P</variation>
    <location>
        <position position="357"/>
    </location>
</feature>
<protein>
    <recommendedName>
        <fullName evidence="1">DNA topoisomerase 6 subunit A3</fullName>
        <shortName>OsTOP6A3</shortName>
        <ecNumber evidence="1">5.6.2.2</ecNumber>
    </recommendedName>
    <alternativeName>
        <fullName evidence="1">DNA topoisomerase 6 subunit A</fullName>
        <shortName>OsTOP6A</shortName>
    </alternativeName>
    <alternativeName>
        <fullName>Meiotic recombination protein SPO11-3</fullName>
    </alternativeName>
</protein>